<dbReference type="EC" id="7.1.1.2"/>
<dbReference type="EMBL" id="AJ639865">
    <property type="protein sequence ID" value="CAG26338.1"/>
    <property type="molecule type" value="Genomic_DNA"/>
</dbReference>
<dbReference type="RefSeq" id="YP_122152.1">
    <property type="nucleotide sequence ID" value="NC_006364.1"/>
</dbReference>
<dbReference type="SMR" id="Q5ZNA1"/>
<dbReference type="GeneID" id="3112546"/>
<dbReference type="CTD" id="4538"/>
<dbReference type="GO" id="GO:0031966">
    <property type="term" value="C:mitochondrial membrane"/>
    <property type="evidence" value="ECO:0007669"/>
    <property type="project" value="UniProtKB-SubCell"/>
</dbReference>
<dbReference type="GO" id="GO:0008137">
    <property type="term" value="F:NADH dehydrogenase (ubiquinone) activity"/>
    <property type="evidence" value="ECO:0007669"/>
    <property type="project" value="UniProtKB-EC"/>
</dbReference>
<dbReference type="GO" id="GO:0048039">
    <property type="term" value="F:ubiquinone binding"/>
    <property type="evidence" value="ECO:0007669"/>
    <property type="project" value="TreeGrafter"/>
</dbReference>
<dbReference type="GO" id="GO:0042773">
    <property type="term" value="P:ATP synthesis coupled electron transport"/>
    <property type="evidence" value="ECO:0007669"/>
    <property type="project" value="InterPro"/>
</dbReference>
<dbReference type="GO" id="GO:0015990">
    <property type="term" value="P:electron transport coupled proton transport"/>
    <property type="evidence" value="ECO:0007669"/>
    <property type="project" value="TreeGrafter"/>
</dbReference>
<dbReference type="InterPro" id="IPR000260">
    <property type="entry name" value="NADH4_N"/>
</dbReference>
<dbReference type="InterPro" id="IPR010227">
    <property type="entry name" value="NADH_Q_OxRdtase_chainM/4"/>
</dbReference>
<dbReference type="InterPro" id="IPR003918">
    <property type="entry name" value="NADH_UbQ_OxRdtase"/>
</dbReference>
<dbReference type="InterPro" id="IPR001750">
    <property type="entry name" value="ND/Mrp_TM"/>
</dbReference>
<dbReference type="NCBIfam" id="TIGR01972">
    <property type="entry name" value="NDH_I_M"/>
    <property type="match status" value="1"/>
</dbReference>
<dbReference type="PANTHER" id="PTHR43507">
    <property type="entry name" value="NADH-UBIQUINONE OXIDOREDUCTASE CHAIN 4"/>
    <property type="match status" value="1"/>
</dbReference>
<dbReference type="PANTHER" id="PTHR43507:SF20">
    <property type="entry name" value="NADH-UBIQUINONE OXIDOREDUCTASE CHAIN 4"/>
    <property type="match status" value="1"/>
</dbReference>
<dbReference type="Pfam" id="PF01059">
    <property type="entry name" value="Oxidored_q5_N"/>
    <property type="match status" value="1"/>
</dbReference>
<dbReference type="Pfam" id="PF00361">
    <property type="entry name" value="Proton_antipo_M"/>
    <property type="match status" value="1"/>
</dbReference>
<dbReference type="PRINTS" id="PR01437">
    <property type="entry name" value="NUOXDRDTASE4"/>
</dbReference>
<protein>
    <recommendedName>
        <fullName>NADH-ubiquinone oxidoreductase chain 4</fullName>
        <ecNumber>7.1.1.2</ecNumber>
    </recommendedName>
    <alternativeName>
        <fullName>NADH dehydrogenase subunit 4</fullName>
    </alternativeName>
</protein>
<geneLocation type="mitochondrion"/>
<name>NU4M_ZAGBR</name>
<comment type="function">
    <text evidence="1">Core subunit of the mitochondrial membrane respiratory chain NADH dehydrogenase (Complex I) that is believed to belong to the minimal assembly required for catalysis. Complex I functions in the transfer of electrons from NADH to the respiratory chain. The immediate electron acceptor for the enzyme is believed to be ubiquinone (By similarity).</text>
</comment>
<comment type="catalytic activity">
    <reaction>
        <text>a ubiquinone + NADH + 5 H(+)(in) = a ubiquinol + NAD(+) + 4 H(+)(out)</text>
        <dbReference type="Rhea" id="RHEA:29091"/>
        <dbReference type="Rhea" id="RHEA-COMP:9565"/>
        <dbReference type="Rhea" id="RHEA-COMP:9566"/>
        <dbReference type="ChEBI" id="CHEBI:15378"/>
        <dbReference type="ChEBI" id="CHEBI:16389"/>
        <dbReference type="ChEBI" id="CHEBI:17976"/>
        <dbReference type="ChEBI" id="CHEBI:57540"/>
        <dbReference type="ChEBI" id="CHEBI:57945"/>
        <dbReference type="EC" id="7.1.1.2"/>
    </reaction>
</comment>
<comment type="subcellular location">
    <subcellularLocation>
        <location evidence="1">Mitochondrion membrane</location>
        <topology evidence="1">Multi-pass membrane protein</topology>
    </subcellularLocation>
</comment>
<comment type="similarity">
    <text evidence="3">Belongs to the complex I subunit 4 family.</text>
</comment>
<accession>Q5ZNA1</accession>
<proteinExistence type="inferred from homology"/>
<gene>
    <name type="primary">MT-ND4</name>
    <name type="synonym">MTND4</name>
    <name type="synonym">NADH4</name>
    <name type="synonym">ND4</name>
</gene>
<feature type="chain" id="PRO_0000118006" description="NADH-ubiquinone oxidoreductase chain 4">
    <location>
        <begin position="1"/>
        <end position="459"/>
    </location>
</feature>
<feature type="transmembrane region" description="Helical" evidence="2">
    <location>
        <begin position="22"/>
        <end position="42"/>
    </location>
</feature>
<feature type="transmembrane region" description="Helical" evidence="2">
    <location>
        <begin position="65"/>
        <end position="85"/>
    </location>
</feature>
<feature type="transmembrane region" description="Helical" evidence="2">
    <location>
        <begin position="96"/>
        <end position="116"/>
    </location>
</feature>
<feature type="transmembrane region" description="Helical" evidence="2">
    <location>
        <begin position="117"/>
        <end position="137"/>
    </location>
</feature>
<feature type="transmembrane region" description="Helical" evidence="2">
    <location>
        <begin position="146"/>
        <end position="166"/>
    </location>
</feature>
<feature type="transmembrane region" description="Helical" evidence="2">
    <location>
        <begin position="194"/>
        <end position="214"/>
    </location>
</feature>
<feature type="transmembrane region" description="Helical" evidence="2">
    <location>
        <begin position="230"/>
        <end position="250"/>
    </location>
</feature>
<feature type="transmembrane region" description="Helical" evidence="2">
    <location>
        <begin position="256"/>
        <end position="276"/>
    </location>
</feature>
<feature type="transmembrane region" description="Helical" evidence="2">
    <location>
        <begin position="284"/>
        <end position="303"/>
    </location>
</feature>
<feature type="transmembrane region" description="Helical" evidence="2">
    <location>
        <begin position="308"/>
        <end position="330"/>
    </location>
</feature>
<feature type="transmembrane region" description="Helical" evidence="2">
    <location>
        <begin position="350"/>
        <end position="370"/>
    </location>
</feature>
<feature type="transmembrane region" description="Helical" evidence="2">
    <location>
        <begin position="392"/>
        <end position="412"/>
    </location>
</feature>
<feature type="transmembrane region" description="Helical" evidence="2">
    <location>
        <begin position="435"/>
        <end position="455"/>
    </location>
</feature>
<reference key="1">
    <citation type="journal article" date="2004" name="Gene">
        <title>Marsupial relationships and a timeline for marsupial radiation in South Gondwana.</title>
        <authorList>
            <person name="Nilsson M.A."/>
            <person name="Arnason U."/>
            <person name="Spencer P.B.S."/>
            <person name="Janke A."/>
        </authorList>
    </citation>
    <scope>NUCLEOTIDE SEQUENCE [GENOMIC DNA]</scope>
    <source>
        <tissue>Liver</tissue>
    </source>
</reference>
<evidence type="ECO:0000250" key="1"/>
<evidence type="ECO:0000255" key="2"/>
<evidence type="ECO:0000305" key="3"/>
<sequence length="459" mass="51551">MLKILLPTVMLLPLISFSKKEWMWINSSAYSILISSLSLLTLNQHMDLGLNFNLNFFTDPLSSPLLVLSCWLLPLMILASQFHLMNESINHKRMYLILLVSLQIALLMAFSAVEFMMYYILFETTLIPTLIIIARWGNQTERLNAGLYFLFYTLLGSLPLLVALIFTQAQMGSLHILLLTLTPNPLLNSWSNDILWLACMMAFLVKMPLYGFHLWLPKAHVEAPIAGSMVLAAILLKLGGYGILRIIIILEPISKFMAYPFIILATWGMIMTSSICLRQTDLKSLIAYSSISHMGLVVAASLIQTPWGFMGATAMMIAHGLTSSMLFCLANTNYERAHSRTMVLIRGLQMVLPLMSSWWLLASLTNLGLPPTINLISELMIIVSTFSWSNFTLILLGLNTVITAIYSLYMLISVQRGKMTTHSLSINPTFTREHMIMALHLLPLILLTLNPKLILGVAY</sequence>
<keyword id="KW-0249">Electron transport</keyword>
<keyword id="KW-0472">Membrane</keyword>
<keyword id="KW-0496">Mitochondrion</keyword>
<keyword id="KW-0520">NAD</keyword>
<keyword id="KW-0679">Respiratory chain</keyword>
<keyword id="KW-1278">Translocase</keyword>
<keyword id="KW-0812">Transmembrane</keyword>
<keyword id="KW-1133">Transmembrane helix</keyword>
<keyword id="KW-0813">Transport</keyword>
<keyword id="KW-0830">Ubiquinone</keyword>
<organism>
    <name type="scientific">Zaglossus bruijni</name>
    <name type="common">Western long-beaked echidna</name>
    <dbReference type="NCBI Taxonomy" id="33543"/>
    <lineage>
        <taxon>Eukaryota</taxon>
        <taxon>Metazoa</taxon>
        <taxon>Chordata</taxon>
        <taxon>Craniata</taxon>
        <taxon>Vertebrata</taxon>
        <taxon>Euteleostomi</taxon>
        <taxon>Mammalia</taxon>
        <taxon>Monotremata</taxon>
        <taxon>Tachyglossidae</taxon>
        <taxon>Zaglossus</taxon>
    </lineage>
</organism>